<organism>
    <name type="scientific">Chlamydia abortus (strain DSM 27085 / S26/3)</name>
    <name type="common">Chlamydophila abortus</name>
    <dbReference type="NCBI Taxonomy" id="218497"/>
    <lineage>
        <taxon>Bacteria</taxon>
        <taxon>Pseudomonadati</taxon>
        <taxon>Chlamydiota</taxon>
        <taxon>Chlamydiia</taxon>
        <taxon>Chlamydiales</taxon>
        <taxon>Chlamydiaceae</taxon>
        <taxon>Chlamydia/Chlamydophila group</taxon>
        <taxon>Chlamydia</taxon>
    </lineage>
</organism>
<sequence length="58" mass="6606">MPSVKVRVGEPVDRALRILKKKVDKEGILKAAKAHRFYDKPSVKKRAKSKAAAKYRSR</sequence>
<feature type="chain" id="PRO_0000266652" description="Small ribosomal subunit protein bS21">
    <location>
        <begin position="1"/>
        <end position="58"/>
    </location>
</feature>
<feature type="region of interest" description="Disordered" evidence="2">
    <location>
        <begin position="39"/>
        <end position="58"/>
    </location>
</feature>
<feature type="compositionally biased region" description="Basic residues" evidence="2">
    <location>
        <begin position="43"/>
        <end position="58"/>
    </location>
</feature>
<gene>
    <name evidence="1" type="primary">rpsU</name>
    <name type="ordered locus">CAB317</name>
</gene>
<comment type="similarity">
    <text evidence="1">Belongs to the bacterial ribosomal protein bS21 family.</text>
</comment>
<keyword id="KW-0687">Ribonucleoprotein</keyword>
<keyword id="KW-0689">Ribosomal protein</keyword>
<protein>
    <recommendedName>
        <fullName evidence="1">Small ribosomal subunit protein bS21</fullName>
    </recommendedName>
    <alternativeName>
        <fullName evidence="3">30S ribosomal protein S21</fullName>
    </alternativeName>
</protein>
<proteinExistence type="inferred from homology"/>
<reference key="1">
    <citation type="journal article" date="2005" name="Genome Res.">
        <title>The Chlamydophila abortus genome sequence reveals an array of variable proteins that contribute to interspecies variation.</title>
        <authorList>
            <person name="Thomson N.R."/>
            <person name="Yeats C."/>
            <person name="Bell K."/>
            <person name="Holden M.T.G."/>
            <person name="Bentley S.D."/>
            <person name="Livingstone M."/>
            <person name="Cerdeno-Tarraga A.-M."/>
            <person name="Harris B."/>
            <person name="Doggett J."/>
            <person name="Ormond D."/>
            <person name="Mungall K."/>
            <person name="Clarke K."/>
            <person name="Feltwell T."/>
            <person name="Hance Z."/>
            <person name="Sanders M."/>
            <person name="Quail M.A."/>
            <person name="Price C."/>
            <person name="Barrell B.G."/>
            <person name="Parkhill J."/>
            <person name="Longbottom D."/>
        </authorList>
    </citation>
    <scope>NUCLEOTIDE SEQUENCE [LARGE SCALE GENOMIC DNA]</scope>
    <source>
        <strain>DSM 27085 / S26/3</strain>
    </source>
</reference>
<name>RS21_CHLAB</name>
<evidence type="ECO:0000255" key="1">
    <source>
        <dbReference type="HAMAP-Rule" id="MF_00358"/>
    </source>
</evidence>
<evidence type="ECO:0000256" key="2">
    <source>
        <dbReference type="SAM" id="MobiDB-lite"/>
    </source>
</evidence>
<evidence type="ECO:0000305" key="3"/>
<dbReference type="EMBL" id="CR848038">
    <property type="protein sequence ID" value="CAH63767.1"/>
    <property type="molecule type" value="Genomic_DNA"/>
</dbReference>
<dbReference type="RefSeq" id="WP_006343002.1">
    <property type="nucleotide sequence ID" value="NC_004552.2"/>
</dbReference>
<dbReference type="SMR" id="Q5L6F8"/>
<dbReference type="GeneID" id="93024872"/>
<dbReference type="KEGG" id="cab:CAB317"/>
<dbReference type="eggNOG" id="COG0828">
    <property type="taxonomic scope" value="Bacteria"/>
</dbReference>
<dbReference type="HOGENOM" id="CLU_159258_2_3_0"/>
<dbReference type="OrthoDB" id="9799244at2"/>
<dbReference type="Proteomes" id="UP000001012">
    <property type="component" value="Chromosome"/>
</dbReference>
<dbReference type="GO" id="GO:1990904">
    <property type="term" value="C:ribonucleoprotein complex"/>
    <property type="evidence" value="ECO:0007669"/>
    <property type="project" value="UniProtKB-KW"/>
</dbReference>
<dbReference type="GO" id="GO:0005840">
    <property type="term" value="C:ribosome"/>
    <property type="evidence" value="ECO:0007669"/>
    <property type="project" value="UniProtKB-KW"/>
</dbReference>
<dbReference type="GO" id="GO:0003735">
    <property type="term" value="F:structural constituent of ribosome"/>
    <property type="evidence" value="ECO:0007669"/>
    <property type="project" value="InterPro"/>
</dbReference>
<dbReference type="GO" id="GO:0006412">
    <property type="term" value="P:translation"/>
    <property type="evidence" value="ECO:0007669"/>
    <property type="project" value="UniProtKB-UniRule"/>
</dbReference>
<dbReference type="Gene3D" id="1.20.5.1150">
    <property type="entry name" value="Ribosomal protein S8"/>
    <property type="match status" value="1"/>
</dbReference>
<dbReference type="HAMAP" id="MF_00358">
    <property type="entry name" value="Ribosomal_bS21"/>
    <property type="match status" value="1"/>
</dbReference>
<dbReference type="InterPro" id="IPR001911">
    <property type="entry name" value="Ribosomal_bS21"/>
</dbReference>
<dbReference type="InterPro" id="IPR038380">
    <property type="entry name" value="Ribosomal_bS21_sf"/>
</dbReference>
<dbReference type="NCBIfam" id="TIGR00030">
    <property type="entry name" value="S21p"/>
    <property type="match status" value="1"/>
</dbReference>
<dbReference type="Pfam" id="PF01165">
    <property type="entry name" value="Ribosomal_S21"/>
    <property type="match status" value="1"/>
</dbReference>
<dbReference type="PRINTS" id="PR00976">
    <property type="entry name" value="RIBOSOMALS21"/>
</dbReference>
<accession>Q5L6F8</accession>